<evidence type="ECO:0000255" key="1">
    <source>
        <dbReference type="HAMAP-Rule" id="MF_01212"/>
    </source>
</evidence>
<evidence type="ECO:0000255" key="2">
    <source>
        <dbReference type="PROSITE-ProRule" id="PRU01175"/>
    </source>
</evidence>
<evidence type="ECO:0000256" key="3">
    <source>
        <dbReference type="SAM" id="MobiDB-lite"/>
    </source>
</evidence>
<name>DGTL1_MYCPA</name>
<keyword id="KW-0378">Hydrolase</keyword>
<keyword id="KW-1185">Reference proteome</keyword>
<accession>Q73Y26</accession>
<comment type="similarity">
    <text evidence="1">Belongs to the dGTPase family. Type 2 subfamily.</text>
</comment>
<organism>
    <name type="scientific">Mycolicibacterium paratuberculosis (strain ATCC BAA-968 / K-10)</name>
    <name type="common">Mycobacterium paratuberculosis</name>
    <dbReference type="NCBI Taxonomy" id="262316"/>
    <lineage>
        <taxon>Bacteria</taxon>
        <taxon>Bacillati</taxon>
        <taxon>Actinomycetota</taxon>
        <taxon>Actinomycetes</taxon>
        <taxon>Mycobacteriales</taxon>
        <taxon>Mycobacteriaceae</taxon>
        <taxon>Mycobacterium</taxon>
        <taxon>Mycobacterium avium complex (MAC)</taxon>
    </lineage>
</organism>
<feature type="chain" id="PRO_1000066422" description="Deoxyguanosinetriphosphate triphosphohydrolase-like protein">
    <location>
        <begin position="1"/>
        <end position="423"/>
    </location>
</feature>
<feature type="domain" description="HD" evidence="2">
    <location>
        <begin position="72"/>
        <end position="220"/>
    </location>
</feature>
<feature type="region of interest" description="Disordered" evidence="3">
    <location>
        <begin position="1"/>
        <end position="38"/>
    </location>
</feature>
<feature type="compositionally biased region" description="Basic and acidic residues" evidence="3">
    <location>
        <begin position="1"/>
        <end position="20"/>
    </location>
</feature>
<reference key="1">
    <citation type="journal article" date="2005" name="Proc. Natl. Acad. Sci. U.S.A.">
        <title>The complete genome sequence of Mycobacterium avium subspecies paratuberculosis.</title>
        <authorList>
            <person name="Li L."/>
            <person name="Bannantine J.P."/>
            <person name="Zhang Q."/>
            <person name="Amonsin A."/>
            <person name="May B.J."/>
            <person name="Alt D."/>
            <person name="Banerji N."/>
            <person name="Kanjilal S."/>
            <person name="Kapur V."/>
        </authorList>
    </citation>
    <scope>NUCLEOTIDE SEQUENCE [LARGE SCALE GENOMIC DNA]</scope>
    <source>
        <strain>ATCC BAA-968 / K-10</strain>
    </source>
</reference>
<dbReference type="EMBL" id="AE016958">
    <property type="protein sequence ID" value="AAS04449.1"/>
    <property type="molecule type" value="Genomic_DNA"/>
</dbReference>
<dbReference type="RefSeq" id="WP_003872507.1">
    <property type="nucleotide sequence ID" value="NZ_CP106873.1"/>
</dbReference>
<dbReference type="SMR" id="Q73Y26"/>
<dbReference type="STRING" id="262316.MAP_2132c"/>
<dbReference type="KEGG" id="mpa:MAP_2132c"/>
<dbReference type="eggNOG" id="COG0232">
    <property type="taxonomic scope" value="Bacteria"/>
</dbReference>
<dbReference type="HOGENOM" id="CLU_028163_0_1_11"/>
<dbReference type="Proteomes" id="UP000000580">
    <property type="component" value="Chromosome"/>
</dbReference>
<dbReference type="GO" id="GO:0008832">
    <property type="term" value="F:dGTPase activity"/>
    <property type="evidence" value="ECO:0007669"/>
    <property type="project" value="TreeGrafter"/>
</dbReference>
<dbReference type="GO" id="GO:0006203">
    <property type="term" value="P:dGTP catabolic process"/>
    <property type="evidence" value="ECO:0007669"/>
    <property type="project" value="TreeGrafter"/>
</dbReference>
<dbReference type="CDD" id="cd00077">
    <property type="entry name" value="HDc"/>
    <property type="match status" value="1"/>
</dbReference>
<dbReference type="FunFam" id="1.10.3210.10:FF:000029">
    <property type="entry name" value="Deoxyguanosinetriphosphate triphosphohydrolase-like protein"/>
    <property type="match status" value="1"/>
</dbReference>
<dbReference type="Gene3D" id="1.10.3210.10">
    <property type="entry name" value="Hypothetical protein af1432"/>
    <property type="match status" value="1"/>
</dbReference>
<dbReference type="HAMAP" id="MF_01212">
    <property type="entry name" value="dGTPase_type2"/>
    <property type="match status" value="1"/>
</dbReference>
<dbReference type="InterPro" id="IPR006261">
    <property type="entry name" value="dGTPase"/>
</dbReference>
<dbReference type="InterPro" id="IPR050135">
    <property type="entry name" value="dGTPase-like"/>
</dbReference>
<dbReference type="InterPro" id="IPR023023">
    <property type="entry name" value="dNTPase_2"/>
</dbReference>
<dbReference type="InterPro" id="IPR003607">
    <property type="entry name" value="HD/PDEase_dom"/>
</dbReference>
<dbReference type="InterPro" id="IPR006674">
    <property type="entry name" value="HD_domain"/>
</dbReference>
<dbReference type="InterPro" id="IPR026875">
    <property type="entry name" value="PHydrolase_assoc_dom"/>
</dbReference>
<dbReference type="NCBIfam" id="TIGR01353">
    <property type="entry name" value="dGTP_triPase"/>
    <property type="match status" value="1"/>
</dbReference>
<dbReference type="NCBIfam" id="NF002829">
    <property type="entry name" value="PRK03007.1"/>
    <property type="match status" value="1"/>
</dbReference>
<dbReference type="PANTHER" id="PTHR11373:SF32">
    <property type="entry name" value="DEOXYGUANOSINETRIPHOSPHATE TRIPHOSPHOHYDROLASE"/>
    <property type="match status" value="1"/>
</dbReference>
<dbReference type="PANTHER" id="PTHR11373">
    <property type="entry name" value="DEOXYNUCLEOSIDE TRIPHOSPHATE TRIPHOSPHOHYDROLASE"/>
    <property type="match status" value="1"/>
</dbReference>
<dbReference type="Pfam" id="PF01966">
    <property type="entry name" value="HD"/>
    <property type="match status" value="1"/>
</dbReference>
<dbReference type="Pfam" id="PF13286">
    <property type="entry name" value="HD_assoc"/>
    <property type="match status" value="1"/>
</dbReference>
<dbReference type="SMART" id="SM00471">
    <property type="entry name" value="HDc"/>
    <property type="match status" value="1"/>
</dbReference>
<dbReference type="SUPFAM" id="SSF109604">
    <property type="entry name" value="HD-domain/PDEase-like"/>
    <property type="match status" value="1"/>
</dbReference>
<dbReference type="PROSITE" id="PS51831">
    <property type="entry name" value="HD"/>
    <property type="match status" value="1"/>
</dbReference>
<sequence length="423" mass="45770">MTRNQHDPYDDFDRQRRVAEAPKTAGLPGTEGQHRTDFARDRARVLHSAALRRLADKTQVVGPREGDTPRTRLTHSLEVAQIGRGMAVGLGCDLDLVELAGLAHDIGHPPYGHNGERALDEVAAAYGGFEGNAQNFRILTSLEPKVLDAQGNSAGLNLTRASLDAVIKYPWRRGEGPGTSKFGFYDDDREAAAWVRAGAPAGRMCLEAQVMDWADDVAYSVHDVEDGVVSQRIDLRVLADDDEAAALAKLGESEFSRVGADDFMAAARRLSALPVVAAVGKYDATLASSVALKRLTSELVGRFASAAIATTRAAAGPGPLVRYRAELAVPDLVRAEVALLKILALQFIMSDPRHQQTQAGQRERIHRVAHWLYAGAPRTLDPVFAAAFNTAADDGARWRVIVDQIASYTEGRLERIDARQAGP</sequence>
<proteinExistence type="inferred from homology"/>
<gene>
    <name type="ordered locus">MAP_2132c</name>
</gene>
<protein>
    <recommendedName>
        <fullName evidence="1">Deoxyguanosinetriphosphate triphosphohydrolase-like protein</fullName>
    </recommendedName>
</protein>